<evidence type="ECO:0000255" key="1">
    <source>
        <dbReference type="HAMAP-Rule" id="MF_00188"/>
    </source>
</evidence>
<protein>
    <recommendedName>
        <fullName evidence="1">Protease HtpX homolog</fullName>
        <ecNumber evidence="1">3.4.24.-</ecNumber>
    </recommendedName>
</protein>
<reference key="1">
    <citation type="journal article" date="2002" name="Proc. Natl. Acad. Sci. U.S.A.">
        <title>Genome sequence and comparative microarray analysis of serotype M18 group A Streptococcus strains associated with acute rheumatic fever outbreaks.</title>
        <authorList>
            <person name="Smoot J.C."/>
            <person name="Barbian K.D."/>
            <person name="Van Gompel J.J."/>
            <person name="Smoot L.M."/>
            <person name="Chaussee M.S."/>
            <person name="Sylva G.L."/>
            <person name="Sturdevant D.E."/>
            <person name="Ricklefs S.M."/>
            <person name="Porcella S.F."/>
            <person name="Parkins L.D."/>
            <person name="Beres S.B."/>
            <person name="Campbell D.S."/>
            <person name="Smith T.M."/>
            <person name="Zhang Q."/>
            <person name="Kapur V."/>
            <person name="Daly J.A."/>
            <person name="Veasy L.G."/>
            <person name="Musser J.M."/>
        </authorList>
    </citation>
    <scope>NUCLEOTIDE SEQUENCE [LARGE SCALE GENOMIC DNA]</scope>
    <source>
        <strain>MGAS8232</strain>
    </source>
</reference>
<organism>
    <name type="scientific">Streptococcus pyogenes serotype M18 (strain MGAS8232)</name>
    <dbReference type="NCBI Taxonomy" id="186103"/>
    <lineage>
        <taxon>Bacteria</taxon>
        <taxon>Bacillati</taxon>
        <taxon>Bacillota</taxon>
        <taxon>Bacilli</taxon>
        <taxon>Lactobacillales</taxon>
        <taxon>Streptococcaceae</taxon>
        <taxon>Streptococcus</taxon>
    </lineage>
</organism>
<keyword id="KW-1003">Cell membrane</keyword>
<keyword id="KW-0378">Hydrolase</keyword>
<keyword id="KW-0472">Membrane</keyword>
<keyword id="KW-0479">Metal-binding</keyword>
<keyword id="KW-0482">Metalloprotease</keyword>
<keyword id="KW-0645">Protease</keyword>
<keyword id="KW-0812">Transmembrane</keyword>
<keyword id="KW-1133">Transmembrane helix</keyword>
<keyword id="KW-0862">Zinc</keyword>
<dbReference type="EC" id="3.4.24.-" evidence="1"/>
<dbReference type="EMBL" id="AE009949">
    <property type="protein sequence ID" value="AAL97081.1"/>
    <property type="molecule type" value="Genomic_DNA"/>
</dbReference>
<dbReference type="RefSeq" id="WP_002985953.1">
    <property type="nucleotide sequence ID" value="NC_003485.1"/>
</dbReference>
<dbReference type="SMR" id="Q8P2K0"/>
<dbReference type="GeneID" id="69901385"/>
<dbReference type="KEGG" id="spm:spyM18_0325"/>
<dbReference type="HOGENOM" id="CLU_042266_2_1_9"/>
<dbReference type="GO" id="GO:0005886">
    <property type="term" value="C:plasma membrane"/>
    <property type="evidence" value="ECO:0007669"/>
    <property type="project" value="UniProtKB-SubCell"/>
</dbReference>
<dbReference type="GO" id="GO:0004222">
    <property type="term" value="F:metalloendopeptidase activity"/>
    <property type="evidence" value="ECO:0007669"/>
    <property type="project" value="UniProtKB-UniRule"/>
</dbReference>
<dbReference type="GO" id="GO:0008270">
    <property type="term" value="F:zinc ion binding"/>
    <property type="evidence" value="ECO:0007669"/>
    <property type="project" value="UniProtKB-UniRule"/>
</dbReference>
<dbReference type="GO" id="GO:0006508">
    <property type="term" value="P:proteolysis"/>
    <property type="evidence" value="ECO:0007669"/>
    <property type="project" value="UniProtKB-KW"/>
</dbReference>
<dbReference type="CDD" id="cd07340">
    <property type="entry name" value="M48B_Htpx_like"/>
    <property type="match status" value="1"/>
</dbReference>
<dbReference type="Gene3D" id="3.30.2010.10">
    <property type="entry name" value="Metalloproteases ('zincins'), catalytic domain"/>
    <property type="match status" value="1"/>
</dbReference>
<dbReference type="HAMAP" id="MF_00188">
    <property type="entry name" value="Pept_M48_protease_HtpX"/>
    <property type="match status" value="1"/>
</dbReference>
<dbReference type="InterPro" id="IPR050083">
    <property type="entry name" value="HtpX_protease"/>
</dbReference>
<dbReference type="InterPro" id="IPR022919">
    <property type="entry name" value="Pept_M48_protease_HtpX"/>
</dbReference>
<dbReference type="InterPro" id="IPR001915">
    <property type="entry name" value="Peptidase_M48"/>
</dbReference>
<dbReference type="NCBIfam" id="NF003425">
    <property type="entry name" value="PRK04897.1"/>
    <property type="match status" value="1"/>
</dbReference>
<dbReference type="PANTHER" id="PTHR43221">
    <property type="entry name" value="PROTEASE HTPX"/>
    <property type="match status" value="1"/>
</dbReference>
<dbReference type="PANTHER" id="PTHR43221:SF1">
    <property type="entry name" value="PROTEASE HTPX"/>
    <property type="match status" value="1"/>
</dbReference>
<dbReference type="Pfam" id="PF01435">
    <property type="entry name" value="Peptidase_M48"/>
    <property type="match status" value="1"/>
</dbReference>
<feature type="chain" id="PRO_0000138901" description="Protease HtpX homolog">
    <location>
        <begin position="1"/>
        <end position="298"/>
    </location>
</feature>
<feature type="transmembrane region" description="Helical" evidence="1">
    <location>
        <begin position="14"/>
        <end position="34"/>
    </location>
</feature>
<feature type="transmembrane region" description="Helical" evidence="1">
    <location>
        <begin position="39"/>
        <end position="59"/>
    </location>
</feature>
<feature type="transmembrane region" description="Helical" evidence="1">
    <location>
        <begin position="158"/>
        <end position="178"/>
    </location>
</feature>
<feature type="transmembrane region" description="Helical" evidence="1">
    <location>
        <begin position="197"/>
        <end position="217"/>
    </location>
</feature>
<feature type="active site" evidence="1">
    <location>
        <position position="144"/>
    </location>
</feature>
<feature type="binding site" evidence="1">
    <location>
        <position position="143"/>
    </location>
    <ligand>
        <name>Zn(2+)</name>
        <dbReference type="ChEBI" id="CHEBI:29105"/>
        <note>catalytic</note>
    </ligand>
</feature>
<feature type="binding site" evidence="1">
    <location>
        <position position="147"/>
    </location>
    <ligand>
        <name>Zn(2+)</name>
        <dbReference type="ChEBI" id="CHEBI:29105"/>
        <note>catalytic</note>
    </ligand>
</feature>
<feature type="binding site" evidence="1">
    <location>
        <position position="226"/>
    </location>
    <ligand>
        <name>Zn(2+)</name>
        <dbReference type="ChEBI" id="CHEBI:29105"/>
        <note>catalytic</note>
    </ligand>
</feature>
<name>HTPX_STRP8</name>
<sequence length="298" mass="32757">MLYQQISQNKQRTVVLLVVFFALLALIGASAGYLLLDNYAMGLVLALVIGVIYATSMIFQSTSLVMSMNNAREVTEKEAPGFFHIVEDMAMVAQIPMPRVFIIEDPSLNAFATGSSPQNAAVAATTGLLEVMNREELEGVIGHEISHIRNYDIRISTIAVALASAVTVISSIGGRMLWYGGGSRRQRDDGDDDVLRIITLLLSLLSLLLAPLVASLIQLAISRQREYLADASSVELTRNPQGMIKALEKLQLSQPMKHPVDDASAALYINEPRKKRSFSSLFSTHPPIEERIERLKNM</sequence>
<gene>
    <name evidence="1" type="primary">htpX</name>
    <name type="ordered locus">spyM18_0325</name>
</gene>
<proteinExistence type="inferred from homology"/>
<accession>Q8P2K0</accession>
<comment type="cofactor">
    <cofactor evidence="1">
        <name>Zn(2+)</name>
        <dbReference type="ChEBI" id="CHEBI:29105"/>
    </cofactor>
    <text evidence="1">Binds 1 zinc ion per subunit.</text>
</comment>
<comment type="subcellular location">
    <subcellularLocation>
        <location evidence="1">Cell membrane</location>
        <topology evidence="1">Multi-pass membrane protein</topology>
    </subcellularLocation>
</comment>
<comment type="similarity">
    <text evidence="1">Belongs to the peptidase M48B family.</text>
</comment>